<dbReference type="EMBL" id="AJ439062">
    <property type="protein sequence ID" value="CAD27749.1"/>
    <property type="molecule type" value="mRNA"/>
</dbReference>
<dbReference type="RefSeq" id="XP_011966335.3">
    <property type="nucleotide sequence ID" value="XM_012110945.4"/>
</dbReference>
<dbReference type="SMR" id="Q863C4"/>
<dbReference type="STRING" id="9940.ENSOARP00000007475"/>
<dbReference type="GlyCosmos" id="Q863C4">
    <property type="glycosylation" value="9 sites, No reported glycans"/>
</dbReference>
<dbReference type="PaxDb" id="9940-ENSOARP00000007475"/>
<dbReference type="GeneID" id="443209"/>
<dbReference type="CTD" id="3694"/>
<dbReference type="eggNOG" id="KOG1226">
    <property type="taxonomic scope" value="Eukaryota"/>
</dbReference>
<dbReference type="HOGENOM" id="CLU_011772_0_1_1"/>
<dbReference type="OMA" id="WIYTVEG"/>
<dbReference type="OrthoDB" id="410592at2759"/>
<dbReference type="Proteomes" id="UP000002356">
    <property type="component" value="Chromosome 2"/>
</dbReference>
<dbReference type="Bgee" id="ENSOARG00000006967">
    <property type="expression patterns" value="Expressed in mammary gland and 37 other cell types or tissues"/>
</dbReference>
<dbReference type="GO" id="GO:0009986">
    <property type="term" value="C:cell surface"/>
    <property type="evidence" value="ECO:0007669"/>
    <property type="project" value="TreeGrafter"/>
</dbReference>
<dbReference type="GO" id="GO:0005925">
    <property type="term" value="C:focal adhesion"/>
    <property type="evidence" value="ECO:0000250"/>
    <property type="project" value="UniProtKB"/>
</dbReference>
<dbReference type="GO" id="GO:0034685">
    <property type="term" value="C:integrin alphav-beta6 complex"/>
    <property type="evidence" value="ECO:0000250"/>
    <property type="project" value="UniProtKB"/>
</dbReference>
<dbReference type="GO" id="GO:0005178">
    <property type="term" value="F:integrin binding"/>
    <property type="evidence" value="ECO:0007669"/>
    <property type="project" value="TreeGrafter"/>
</dbReference>
<dbReference type="GO" id="GO:0046872">
    <property type="term" value="F:metal ion binding"/>
    <property type="evidence" value="ECO:0007669"/>
    <property type="project" value="UniProtKB-KW"/>
</dbReference>
<dbReference type="GO" id="GO:0001618">
    <property type="term" value="F:virus receptor activity"/>
    <property type="evidence" value="ECO:0007669"/>
    <property type="project" value="UniProtKB-KW"/>
</dbReference>
<dbReference type="GO" id="GO:0033627">
    <property type="term" value="P:cell adhesion mediated by integrin"/>
    <property type="evidence" value="ECO:0000250"/>
    <property type="project" value="UniProtKB"/>
</dbReference>
<dbReference type="GO" id="GO:0016477">
    <property type="term" value="P:cell migration"/>
    <property type="evidence" value="ECO:0007669"/>
    <property type="project" value="TreeGrafter"/>
</dbReference>
<dbReference type="GO" id="GO:0098609">
    <property type="term" value="P:cell-cell adhesion"/>
    <property type="evidence" value="ECO:0007669"/>
    <property type="project" value="TreeGrafter"/>
</dbReference>
<dbReference type="GO" id="GO:0007160">
    <property type="term" value="P:cell-matrix adhesion"/>
    <property type="evidence" value="ECO:0007669"/>
    <property type="project" value="TreeGrafter"/>
</dbReference>
<dbReference type="GO" id="GO:0007229">
    <property type="term" value="P:integrin-mediated signaling pathway"/>
    <property type="evidence" value="ECO:0007669"/>
    <property type="project" value="UniProtKB-KW"/>
</dbReference>
<dbReference type="FunFam" id="1.20.5.100:FF:000004">
    <property type="entry name" value="Integrin beta"/>
    <property type="match status" value="1"/>
</dbReference>
<dbReference type="FunFam" id="2.10.25.10:FF:000043">
    <property type="entry name" value="Integrin beta"/>
    <property type="match status" value="1"/>
</dbReference>
<dbReference type="FunFam" id="2.10.25.10:FF:000075">
    <property type="entry name" value="Integrin beta"/>
    <property type="match status" value="1"/>
</dbReference>
<dbReference type="FunFam" id="2.10.25.10:FF:000328">
    <property type="entry name" value="Integrin beta"/>
    <property type="match status" value="1"/>
</dbReference>
<dbReference type="FunFam" id="2.60.40.1510:FF:000021">
    <property type="entry name" value="Integrin beta"/>
    <property type="match status" value="1"/>
</dbReference>
<dbReference type="FunFam" id="3.30.1680.10:FF:000002">
    <property type="entry name" value="Integrin beta"/>
    <property type="match status" value="1"/>
</dbReference>
<dbReference type="FunFam" id="3.40.50.410:FF:000002">
    <property type="entry name" value="Integrin beta"/>
    <property type="match status" value="1"/>
</dbReference>
<dbReference type="FunFam" id="4.10.1240.30:FF:000004">
    <property type="entry name" value="Integrin beta"/>
    <property type="match status" value="1"/>
</dbReference>
<dbReference type="Gene3D" id="4.10.1240.30">
    <property type="match status" value="1"/>
</dbReference>
<dbReference type="Gene3D" id="1.20.5.100">
    <property type="entry name" value="Cytochrome c1, transmembrane anchor, C-terminal"/>
    <property type="match status" value="1"/>
</dbReference>
<dbReference type="Gene3D" id="2.10.25.10">
    <property type="entry name" value="Laminin"/>
    <property type="match status" value="4"/>
</dbReference>
<dbReference type="Gene3D" id="3.30.1680.10">
    <property type="entry name" value="ligand-binding face of the semaphorins, domain 2"/>
    <property type="match status" value="1"/>
</dbReference>
<dbReference type="Gene3D" id="2.60.40.1510">
    <property type="entry name" value="ntegrin, alpha v. Chain A, domain 3"/>
    <property type="match status" value="1"/>
</dbReference>
<dbReference type="Gene3D" id="3.40.50.410">
    <property type="entry name" value="von Willebrand factor, type A domain"/>
    <property type="match status" value="1"/>
</dbReference>
<dbReference type="InterPro" id="IPR013111">
    <property type="entry name" value="EGF_extracell"/>
</dbReference>
<dbReference type="InterPro" id="IPR040622">
    <property type="entry name" value="I-EGF_1"/>
</dbReference>
<dbReference type="InterPro" id="IPR033760">
    <property type="entry name" value="Integrin_beta_N"/>
</dbReference>
<dbReference type="InterPro" id="IPR015812">
    <property type="entry name" value="Integrin_bsu"/>
</dbReference>
<dbReference type="InterPro" id="IPR014836">
    <property type="entry name" value="Integrin_bsu_cyt_dom"/>
</dbReference>
<dbReference type="InterPro" id="IPR012896">
    <property type="entry name" value="Integrin_bsu_tail"/>
</dbReference>
<dbReference type="InterPro" id="IPR036349">
    <property type="entry name" value="Integrin_bsu_tail_dom_sf"/>
</dbReference>
<dbReference type="InterPro" id="IPR002369">
    <property type="entry name" value="Integrin_bsu_VWA"/>
</dbReference>
<dbReference type="InterPro" id="IPR032695">
    <property type="entry name" value="Integrin_dom_sf"/>
</dbReference>
<dbReference type="InterPro" id="IPR016201">
    <property type="entry name" value="PSI"/>
</dbReference>
<dbReference type="InterPro" id="IPR036465">
    <property type="entry name" value="vWFA_dom_sf"/>
</dbReference>
<dbReference type="PANTHER" id="PTHR10082">
    <property type="entry name" value="INTEGRIN BETA SUBUNIT"/>
    <property type="match status" value="1"/>
</dbReference>
<dbReference type="PANTHER" id="PTHR10082:SF11">
    <property type="entry name" value="INTEGRIN BETA-6"/>
    <property type="match status" value="1"/>
</dbReference>
<dbReference type="Pfam" id="PF07974">
    <property type="entry name" value="EGF_2"/>
    <property type="match status" value="1"/>
</dbReference>
<dbReference type="Pfam" id="PF23105">
    <property type="entry name" value="EGF_integrin"/>
    <property type="match status" value="1"/>
</dbReference>
<dbReference type="Pfam" id="PF18372">
    <property type="entry name" value="I-EGF_1"/>
    <property type="match status" value="1"/>
</dbReference>
<dbReference type="Pfam" id="PF08725">
    <property type="entry name" value="Integrin_b_cyt"/>
    <property type="match status" value="1"/>
</dbReference>
<dbReference type="Pfam" id="PF07965">
    <property type="entry name" value="Integrin_B_tail"/>
    <property type="match status" value="1"/>
</dbReference>
<dbReference type="Pfam" id="PF00362">
    <property type="entry name" value="Integrin_beta"/>
    <property type="match status" value="1"/>
</dbReference>
<dbReference type="Pfam" id="PF17205">
    <property type="entry name" value="PSI_integrin"/>
    <property type="match status" value="1"/>
</dbReference>
<dbReference type="PIRSF" id="PIRSF002512">
    <property type="entry name" value="Integrin_B"/>
    <property type="match status" value="1"/>
</dbReference>
<dbReference type="PRINTS" id="PR01186">
    <property type="entry name" value="INTEGRINB"/>
</dbReference>
<dbReference type="SMART" id="SM00187">
    <property type="entry name" value="INB"/>
    <property type="match status" value="1"/>
</dbReference>
<dbReference type="SMART" id="SM01241">
    <property type="entry name" value="Integrin_b_cyt"/>
    <property type="match status" value="1"/>
</dbReference>
<dbReference type="SMART" id="SM01242">
    <property type="entry name" value="Integrin_B_tail"/>
    <property type="match status" value="1"/>
</dbReference>
<dbReference type="SMART" id="SM00423">
    <property type="entry name" value="PSI"/>
    <property type="match status" value="1"/>
</dbReference>
<dbReference type="SUPFAM" id="SSF57196">
    <property type="entry name" value="EGF/Laminin"/>
    <property type="match status" value="2"/>
</dbReference>
<dbReference type="SUPFAM" id="SSF69687">
    <property type="entry name" value="Integrin beta tail domain"/>
    <property type="match status" value="1"/>
</dbReference>
<dbReference type="SUPFAM" id="SSF69179">
    <property type="entry name" value="Integrin domains"/>
    <property type="match status" value="2"/>
</dbReference>
<dbReference type="SUPFAM" id="SSF103575">
    <property type="entry name" value="Plexin repeat"/>
    <property type="match status" value="1"/>
</dbReference>
<dbReference type="SUPFAM" id="SSF53300">
    <property type="entry name" value="vWA-like"/>
    <property type="match status" value="1"/>
</dbReference>
<dbReference type="PROSITE" id="PS00022">
    <property type="entry name" value="EGF_1"/>
    <property type="match status" value="2"/>
</dbReference>
<dbReference type="PROSITE" id="PS01186">
    <property type="entry name" value="EGF_2"/>
    <property type="match status" value="1"/>
</dbReference>
<dbReference type="PROSITE" id="PS00243">
    <property type="entry name" value="I_EGF_1"/>
    <property type="match status" value="2"/>
</dbReference>
<dbReference type="PROSITE" id="PS52047">
    <property type="entry name" value="I_EGF_2"/>
    <property type="match status" value="4"/>
</dbReference>
<sequence>MGIELLCLFFLFLGRNDHVQGGCAMGGAETCEDCLLIGPQCAWCSQENFTHLSGVGERCDTPANLLAKGCQLTFIENPVSQVEILTNKPLSIGRQKNSSNIVQISPQSLALKLRPGLEQTLQVQVRQTEDYPVDLYYLMDLSASMDDDLNTIKELGSLLSKEMSKLTSNFRLGFGSFVEKPISPFMKTTPEEIANPCSSIPYFCLPTFGFKHILPLTNDAERFNEIVKNQKISANIDTPEGGFDAIMQAAVCKEKIGWRNDSLHLLVFVSDADSHFGMDSKLAGIVIPNDGLCHLDSKNEYSMSTILEYPTIGQLIDKLVQNNVLLIFAVTQEQVHLYENYAKLIPGATVGVLQKDSGNILQLIISAYEELRSEVELEVLGDTEGLNLSFTAICNSGVPFPHQKKCSHMKVGDTASFNVTVSLPNCERRSRHVILKPVGLGDALEILVSPECSCDCQKEVEVNSSKCSNGNGSFQCGVCACNPGHVGHHCECGEDTLSTESCKEAPELPSCSGRGDCYCGQCVCHLSPYGNIYGPYCQCDNFSCVRHKGLLCGDNGDCDCGECVCRSGWTGEYCNCTTSTDPCVSEDGILCSGRGDCVCGKCICTNPGASGPACERCPTCSDPCNSKRNCIECYLSADGQAQEECVDKCKLAGATINEEEDFSKDSSVSCSLQGENECLITFLLTTDNEGKTVIHSIEKDCPKPPNIPMIMLGVSLAILLIGVALLCIWKLLVSFHDRKEVAKFEAERSKAKWQTGTNPLYRGSTSTFKNVTYKHKEKQKVDLSTDG</sequence>
<comment type="function">
    <text evidence="2 3">Integrin alpha-V:beta-6 (ITGAV:ITGB6) is a receptor for fibronectin and cytotactin (By similarity). It recognizes the sequence R-G-D in its ligands (By similarity). ITGAV:ITGB6 acts as a receptor for fibrillin-1 (FBN1) and mediates R-G-D-dependent cell adhesion to FBN1 (By similarity). Integrin alpha-V:beta-6 (ITGAV:ITGB6) mediates R-G-D-dependent release of transforming growth factor beta-1 (TGF-beta-1) from regulatory Latency-associated peptide (LAP), thereby playing a key role in TGF-beta-1 activation (By similarity).</text>
</comment>
<comment type="subunit">
    <text evidence="2 3">Heterodimer of an alpha and a beta subunit (By similarity). Interacts with FLNB. Interacts with HAX1. ITGAV:ITGB6 interacts with FBN1 (By similarity). ITGAV:ITGB6 interacts with TGFB1 (By similarity).</text>
</comment>
<comment type="subcellular location">
    <subcellularLocation>
        <location evidence="2">Cell membrane</location>
        <topology evidence="2">Single-pass type I membrane protein</topology>
    </subcellularLocation>
    <subcellularLocation>
        <location evidence="2">Cell junction</location>
        <location evidence="2">Focal adhesion</location>
    </subcellularLocation>
</comment>
<comment type="domain">
    <text evidence="1">The VWFA domain (or beta I domain) contains three cation-binding sites: the ligand-associated metal ion-binding site (LIMBS or SyMBS), the metal ion-dependent adhesion site (MIDAS), and the adjacent MIDAS site (ADMIDAS). This domain is also part of the ligand-binding site.</text>
</comment>
<comment type="similarity">
    <text evidence="6">Belongs to the integrin beta chain family.</text>
</comment>
<keyword id="KW-0106">Calcium</keyword>
<keyword id="KW-0130">Cell adhesion</keyword>
<keyword id="KW-0965">Cell junction</keyword>
<keyword id="KW-1003">Cell membrane</keyword>
<keyword id="KW-1015">Disulfide bond</keyword>
<keyword id="KW-0245">EGF-like domain</keyword>
<keyword id="KW-0325">Glycoprotein</keyword>
<keyword id="KW-1183">Host cell receptor for virus entry</keyword>
<keyword id="KW-0945">Host-virus interaction</keyword>
<keyword id="KW-0401">Integrin</keyword>
<keyword id="KW-0460">Magnesium</keyword>
<keyword id="KW-0472">Membrane</keyword>
<keyword id="KW-0479">Metal-binding</keyword>
<keyword id="KW-0675">Receptor</keyword>
<keyword id="KW-1185">Reference proteome</keyword>
<keyword id="KW-0677">Repeat</keyword>
<keyword id="KW-0732">Signal</keyword>
<keyword id="KW-0812">Transmembrane</keyword>
<keyword id="KW-1133">Transmembrane helix</keyword>
<protein>
    <recommendedName>
        <fullName>Integrin beta-6</fullName>
    </recommendedName>
</protein>
<gene>
    <name type="primary">ITGB6</name>
</gene>
<feature type="signal peptide" evidence="4">
    <location>
        <begin position="1"/>
        <end position="21"/>
    </location>
</feature>
<feature type="chain" id="PRO_0000273713" description="Integrin beta-6">
    <location>
        <begin position="22"/>
        <end position="787"/>
    </location>
</feature>
<feature type="topological domain" description="Extracellular" evidence="4">
    <location>
        <begin position="22"/>
        <end position="708"/>
    </location>
</feature>
<feature type="transmembrane region" description="Helical" evidence="4">
    <location>
        <begin position="709"/>
        <end position="729"/>
    </location>
</feature>
<feature type="topological domain" description="Cytoplasmic" evidence="4">
    <location>
        <begin position="730"/>
        <end position="787"/>
    </location>
</feature>
<feature type="domain" description="PSI" evidence="4">
    <location>
        <begin position="22"/>
        <end position="71"/>
    </location>
</feature>
<feature type="domain" description="VWFA" evidence="1">
    <location>
        <begin position="131"/>
        <end position="371"/>
    </location>
</feature>
<feature type="domain" description="I-EGF 1" evidence="5">
    <location>
        <begin position="456"/>
        <end position="491"/>
    </location>
</feature>
<feature type="domain" description="I-EGF 2" evidence="5">
    <location>
        <begin position="492"/>
        <end position="538"/>
    </location>
</feature>
<feature type="domain" description="I-EGF 3" evidence="5">
    <location>
        <begin position="539"/>
        <end position="575"/>
    </location>
</feature>
<feature type="domain" description="I-EGF 4" evidence="5">
    <location>
        <begin position="576"/>
        <end position="615"/>
    </location>
</feature>
<feature type="region of interest" description="Interaction with HAX1" evidence="2">
    <location>
        <begin position="730"/>
        <end position="757"/>
    </location>
</feature>
<feature type="binding site" description="in MIDAS binding site" evidence="2">
    <location>
        <position position="140"/>
    </location>
    <ligand>
        <name>Mg(2+)</name>
        <dbReference type="ChEBI" id="CHEBI:18420"/>
    </ligand>
</feature>
<feature type="binding site" description="in MIDAS binding site" evidence="2">
    <location>
        <position position="142"/>
    </location>
    <ligand>
        <name>Mg(2+)</name>
        <dbReference type="ChEBI" id="CHEBI:18420"/>
    </ligand>
</feature>
<feature type="binding site" description="in ADMIDAS binding site" evidence="2">
    <location>
        <position position="144"/>
    </location>
    <ligand>
        <name>Ca(2+)</name>
        <dbReference type="ChEBI" id="CHEBI:29108"/>
        <label>1</label>
    </ligand>
</feature>
<feature type="binding site" description="in MIDAS binding site" evidence="1">
    <location>
        <position position="144"/>
    </location>
    <ligand>
        <name>Mg(2+)</name>
        <dbReference type="ChEBI" id="CHEBI:18420"/>
    </ligand>
</feature>
<feature type="binding site" description="in ADMIDAS binding site" evidence="2">
    <location>
        <position position="147"/>
    </location>
    <ligand>
        <name>Ca(2+)</name>
        <dbReference type="ChEBI" id="CHEBI:29108"/>
        <label>1</label>
    </ligand>
</feature>
<feature type="binding site" description="in ADMIDAS binding site" evidence="2">
    <location>
        <position position="148"/>
    </location>
    <ligand>
        <name>Ca(2+)</name>
        <dbReference type="ChEBI" id="CHEBI:29108"/>
        <label>1</label>
    </ligand>
</feature>
<feature type="binding site" description="in LIMBS binding site" evidence="2">
    <location>
        <position position="179"/>
    </location>
    <ligand>
        <name>Ca(2+)</name>
        <dbReference type="ChEBI" id="CHEBI:29108"/>
        <label>2</label>
    </ligand>
</feature>
<feature type="binding site" description="in LIMBS binding site" evidence="2">
    <location>
        <position position="235"/>
    </location>
    <ligand>
        <name>Ca(2+)</name>
        <dbReference type="ChEBI" id="CHEBI:29108"/>
        <label>2</label>
    </ligand>
</feature>
<feature type="binding site" description="in LIMBS binding site" evidence="2">
    <location>
        <position position="237"/>
    </location>
    <ligand>
        <name>Ca(2+)</name>
        <dbReference type="ChEBI" id="CHEBI:29108"/>
        <label>2</label>
    </ligand>
</feature>
<feature type="binding site" description="in LIMBS binding site" evidence="2">
    <location>
        <position position="239"/>
    </location>
    <ligand>
        <name>Ca(2+)</name>
        <dbReference type="ChEBI" id="CHEBI:29108"/>
        <label>2</label>
    </ligand>
</feature>
<feature type="binding site" description="in LIMBS binding site" evidence="2">
    <location>
        <position position="240"/>
    </location>
    <ligand>
        <name>Ca(2+)</name>
        <dbReference type="ChEBI" id="CHEBI:29108"/>
        <label>2</label>
    </ligand>
</feature>
<feature type="binding site" description="in MIDAS binding site" evidence="2">
    <location>
        <position position="240"/>
    </location>
    <ligand>
        <name>Mg(2+)</name>
        <dbReference type="ChEBI" id="CHEBI:18420"/>
    </ligand>
</feature>
<feature type="binding site" description="in ADMIDAS binding site and liganded-open conformation" evidence="1">
    <location>
        <position position="271"/>
    </location>
    <ligand>
        <name>Ca(2+)</name>
        <dbReference type="ChEBI" id="CHEBI:29108"/>
        <label>1</label>
    </ligand>
</feature>
<feature type="binding site" description="in ADMIDAS binding site and unliganded-closed conformation" evidence="2">
    <location>
        <position position="355"/>
    </location>
    <ligand>
        <name>Ca(2+)</name>
        <dbReference type="ChEBI" id="CHEBI:29108"/>
        <label>1</label>
    </ligand>
</feature>
<feature type="glycosylation site" description="N-linked (GlcNAc...) asparagine" evidence="4">
    <location>
        <position position="48"/>
    </location>
</feature>
<feature type="glycosylation site" description="N-linked (GlcNAc...) asparagine" evidence="4">
    <location>
        <position position="97"/>
    </location>
</feature>
<feature type="glycosylation site" description="N-linked (GlcNAc...) asparagine" evidence="4">
    <location>
        <position position="260"/>
    </location>
</feature>
<feature type="glycosylation site" description="N-linked (GlcNAc...) asparagine" evidence="4">
    <location>
        <position position="387"/>
    </location>
</feature>
<feature type="glycosylation site" description="N-linked (GlcNAc...) asparagine" evidence="4">
    <location>
        <position position="418"/>
    </location>
</feature>
<feature type="glycosylation site" description="N-linked (GlcNAc...) asparagine" evidence="4">
    <location>
        <position position="463"/>
    </location>
</feature>
<feature type="glycosylation site" description="N-linked (GlcNAc...) asparagine" evidence="4">
    <location>
        <position position="471"/>
    </location>
</feature>
<feature type="glycosylation site" description="N-linked (GlcNAc...) asparagine" evidence="4">
    <location>
        <position position="541"/>
    </location>
</feature>
<feature type="glycosylation site" description="N-linked (GlcNAc...) asparagine" evidence="4">
    <location>
        <position position="575"/>
    </location>
</feature>
<feature type="disulfide bond" evidence="2">
    <location>
        <begin position="23"/>
        <end position="41"/>
    </location>
</feature>
<feature type="disulfide bond" evidence="2">
    <location>
        <begin position="31"/>
        <end position="454"/>
    </location>
</feature>
<feature type="disulfide bond" evidence="2">
    <location>
        <begin position="34"/>
        <end position="59"/>
    </location>
</feature>
<feature type="disulfide bond" evidence="2">
    <location>
        <begin position="44"/>
        <end position="70"/>
    </location>
</feature>
<feature type="disulfide bond" evidence="2">
    <location>
        <begin position="197"/>
        <end position="204"/>
    </location>
</feature>
<feature type="disulfide bond" evidence="2">
    <location>
        <begin position="252"/>
        <end position="293"/>
    </location>
</feature>
<feature type="disulfide bond" evidence="2">
    <location>
        <begin position="394"/>
        <end position="406"/>
    </location>
</feature>
<feature type="disulfide bond" evidence="2">
    <location>
        <begin position="426"/>
        <end position="452"/>
    </location>
</feature>
<feature type="disulfide bond" evidence="5">
    <location>
        <begin position="456"/>
        <end position="476"/>
    </location>
</feature>
<feature type="disulfide bond" evidence="5">
    <location>
        <begin position="467"/>
        <end position="479"/>
    </location>
</feature>
<feature type="disulfide bond" evidence="5">
    <location>
        <begin position="481"/>
        <end position="490"/>
    </location>
</feature>
<feature type="disulfide bond" evidence="5">
    <location>
        <begin position="492"/>
        <end position="519"/>
    </location>
</feature>
<feature type="disulfide bond" evidence="5">
    <location>
        <begin position="502"/>
        <end position="517"/>
    </location>
</feature>
<feature type="disulfide bond" evidence="5">
    <location>
        <begin position="511"/>
        <end position="522"/>
    </location>
</feature>
<feature type="disulfide bond" evidence="5">
    <location>
        <begin position="524"/>
        <end position="537"/>
    </location>
</feature>
<feature type="disulfide bond" evidence="5">
    <location>
        <begin position="539"/>
        <end position="560"/>
    </location>
</feature>
<feature type="disulfide bond" evidence="5">
    <location>
        <begin position="544"/>
        <end position="558"/>
    </location>
</feature>
<feature type="disulfide bond" evidence="5">
    <location>
        <begin position="552"/>
        <end position="563"/>
    </location>
</feature>
<feature type="disulfide bond" evidence="5">
    <location>
        <begin position="565"/>
        <end position="574"/>
    </location>
</feature>
<feature type="disulfide bond" evidence="5">
    <location>
        <begin position="576"/>
        <end position="599"/>
    </location>
</feature>
<feature type="disulfide bond" evidence="5">
    <location>
        <begin position="583"/>
        <end position="597"/>
    </location>
</feature>
<feature type="disulfide bond" evidence="5">
    <location>
        <begin position="591"/>
        <end position="602"/>
    </location>
</feature>
<feature type="disulfide bond" evidence="5">
    <location>
        <begin position="604"/>
        <end position="614"/>
    </location>
</feature>
<feature type="disulfide bond" evidence="1">
    <location>
        <begin position="617"/>
        <end position="620"/>
    </location>
</feature>
<feature type="disulfide bond" evidence="1">
    <location>
        <begin position="624"/>
        <end position="670"/>
    </location>
</feature>
<feature type="disulfide bond" evidence="1">
    <location>
        <begin position="630"/>
        <end position="649"/>
    </location>
</feature>
<feature type="disulfide bond" evidence="1">
    <location>
        <begin position="633"/>
        <end position="645"/>
    </location>
</feature>
<feature type="disulfide bond" evidence="1">
    <location>
        <begin position="678"/>
        <end position="701"/>
    </location>
</feature>
<reference key="1">
    <citation type="submission" date="2002-03" db="EMBL/GenBank/DDBJ databases">
        <title>Cloning and sequencing of the cDNA for sheep integrin subunit beta-6.</title>
        <authorList>
            <person name="McAleese S.M."/>
            <person name="Collie D.D.S."/>
            <person name="Miller H.R.P."/>
        </authorList>
    </citation>
    <scope>NUCLEOTIDE SEQUENCE [MRNA]</scope>
    <source>
        <tissue>Airway epithelium</tissue>
    </source>
</reference>
<name>ITB6_SHEEP</name>
<proteinExistence type="evidence at transcript level"/>
<accession>Q863C4</accession>
<evidence type="ECO:0000250" key="1">
    <source>
        <dbReference type="UniProtKB" id="P05106"/>
    </source>
</evidence>
<evidence type="ECO:0000250" key="2">
    <source>
        <dbReference type="UniProtKB" id="P18564"/>
    </source>
</evidence>
<evidence type="ECO:0000250" key="3">
    <source>
        <dbReference type="UniProtKB" id="Q9Z0T9"/>
    </source>
</evidence>
<evidence type="ECO:0000255" key="4"/>
<evidence type="ECO:0000255" key="5">
    <source>
        <dbReference type="PROSITE-ProRule" id="PRU01392"/>
    </source>
</evidence>
<evidence type="ECO:0000305" key="6"/>
<organism>
    <name type="scientific">Ovis aries</name>
    <name type="common">Sheep</name>
    <dbReference type="NCBI Taxonomy" id="9940"/>
    <lineage>
        <taxon>Eukaryota</taxon>
        <taxon>Metazoa</taxon>
        <taxon>Chordata</taxon>
        <taxon>Craniata</taxon>
        <taxon>Vertebrata</taxon>
        <taxon>Euteleostomi</taxon>
        <taxon>Mammalia</taxon>
        <taxon>Eutheria</taxon>
        <taxon>Laurasiatheria</taxon>
        <taxon>Artiodactyla</taxon>
        <taxon>Ruminantia</taxon>
        <taxon>Pecora</taxon>
        <taxon>Bovidae</taxon>
        <taxon>Caprinae</taxon>
        <taxon>Ovis</taxon>
    </lineage>
</organism>